<name>RL102_ORYSJ</name>
<comment type="subunit">
    <text evidence="1">Component of the small ribosomal subunit. Mature ribosomes consist of a small (40S) and a large (60S) subunit. The 40S subunit contains about 33 different proteins and 1 molecule of RNA (18S). The 60S subunit contains about 49 different proteins and 3 molecules of RNA (25S, 5.8S and 5S) (By similarity).</text>
</comment>
<comment type="similarity">
    <text evidence="2">Belongs to the universal ribosomal protein uL16 family.</text>
</comment>
<evidence type="ECO:0000250" key="1"/>
<evidence type="ECO:0000305" key="2"/>
<proteinExistence type="evidence at transcript level"/>
<keyword id="KW-1185">Reference proteome</keyword>
<keyword id="KW-0687">Ribonucleoprotein</keyword>
<keyword id="KW-0689">Ribosomal protein</keyword>
<protein>
    <recommendedName>
        <fullName evidence="2">Large ribosomal subunit protein uL16y</fullName>
    </recommendedName>
    <alternativeName>
        <fullName>60S ribosomal protein L10-2</fullName>
    </alternativeName>
    <alternativeName>
        <fullName>Protein QM1</fullName>
    </alternativeName>
    <alternativeName>
        <fullName>Putative tumor suppressor SG12</fullName>
    </alternativeName>
</protein>
<organism>
    <name type="scientific">Oryza sativa subsp. japonica</name>
    <name type="common">Rice</name>
    <dbReference type="NCBI Taxonomy" id="39947"/>
    <lineage>
        <taxon>Eukaryota</taxon>
        <taxon>Viridiplantae</taxon>
        <taxon>Streptophyta</taxon>
        <taxon>Embryophyta</taxon>
        <taxon>Tracheophyta</taxon>
        <taxon>Spermatophyta</taxon>
        <taxon>Magnoliopsida</taxon>
        <taxon>Liliopsida</taxon>
        <taxon>Poales</taxon>
        <taxon>Poaceae</taxon>
        <taxon>BOP clade</taxon>
        <taxon>Oryzoideae</taxon>
        <taxon>Oryzeae</taxon>
        <taxon>Oryzinae</taxon>
        <taxon>Oryza</taxon>
        <taxon>Oryza sativa</taxon>
    </lineage>
</organism>
<gene>
    <name type="primary">SG12</name>
    <name type="synonym">QM1</name>
    <name type="ordered locus">Os05g0169100</name>
    <name type="ordered locus">LOC_Os05g07700</name>
</gene>
<accession>Q0DKF0</accession>
<accession>P45636</accession>
<accession>Q40649</accession>
<accession>Q40717</accession>
<sequence>MGRRPARCYRQIKNKPYPKSRYCRGVPDPKIRIYDVGMKKKGVDEFSHCVHLVSWEKENVTSEALEAARIACNKYMTKSAGKDAFHLRVRVHPFHVLRINKMLSCAGADRLQTGMRGAFGKPQGTCARVDIGQVLLSVRCKPNNAVHASEALRRAKFKFPGRQKIIESRKWGFTKFSRDEYVRLKSEGRIMPDGVNAKLLGCHGRLSARAPGKAFLSAA</sequence>
<feature type="chain" id="PRO_0000147120" description="Large ribosomal subunit protein uL16y">
    <location>
        <begin position="1"/>
        <end position="219"/>
    </location>
</feature>
<reference key="1">
    <citation type="journal article" date="2005" name="Nature">
        <title>The map-based sequence of the rice genome.</title>
        <authorList>
            <consortium name="International rice genome sequencing project (IRGSP)"/>
        </authorList>
    </citation>
    <scope>NUCLEOTIDE SEQUENCE [LARGE SCALE GENOMIC DNA]</scope>
    <source>
        <strain>cv. Nipponbare</strain>
    </source>
</reference>
<reference key="2">
    <citation type="journal article" date="2008" name="Nucleic Acids Res.">
        <title>The rice annotation project database (RAP-DB): 2008 update.</title>
        <authorList>
            <consortium name="The rice annotation project (RAP)"/>
        </authorList>
    </citation>
    <scope>GENOME REANNOTATION</scope>
    <source>
        <strain>cv. Nipponbare</strain>
    </source>
</reference>
<reference key="3">
    <citation type="journal article" date="2013" name="Rice">
        <title>Improvement of the Oryza sativa Nipponbare reference genome using next generation sequence and optical map data.</title>
        <authorList>
            <person name="Kawahara Y."/>
            <person name="de la Bastide M."/>
            <person name="Hamilton J.P."/>
            <person name="Kanamori H."/>
            <person name="McCombie W.R."/>
            <person name="Ouyang S."/>
            <person name="Schwartz D.C."/>
            <person name="Tanaka T."/>
            <person name="Wu J."/>
            <person name="Zhou S."/>
            <person name="Childs K.L."/>
            <person name="Davidson R.M."/>
            <person name="Lin H."/>
            <person name="Quesada-Ocampo L."/>
            <person name="Vaillancourt B."/>
            <person name="Sakai H."/>
            <person name="Lee S.S."/>
            <person name="Kim J."/>
            <person name="Numa H."/>
            <person name="Itoh T."/>
            <person name="Buell C.R."/>
            <person name="Matsumoto T."/>
        </authorList>
    </citation>
    <scope>GENOME REANNOTATION</scope>
    <source>
        <strain>cv. Nipponbare</strain>
    </source>
</reference>
<reference key="4">
    <citation type="journal article" date="2003" name="Science">
        <title>Collection, mapping, and annotation of over 28,000 cDNA clones from japonica rice.</title>
        <authorList>
            <consortium name="The rice full-length cDNA consortium"/>
        </authorList>
    </citation>
    <scope>NUCLEOTIDE SEQUENCE [LARGE SCALE MRNA]</scope>
    <source>
        <strain>cv. Nipponbare</strain>
    </source>
</reference>
<dbReference type="EMBL" id="AP008211">
    <property type="protein sequence ID" value="BAF16673.1"/>
    <property type="molecule type" value="Genomic_DNA"/>
</dbReference>
<dbReference type="EMBL" id="AP014961">
    <property type="protein sequence ID" value="BAS92463.1"/>
    <property type="molecule type" value="Genomic_DNA"/>
</dbReference>
<dbReference type="EMBL" id="AK066128">
    <property type="status" value="NOT_ANNOTATED_CDS"/>
    <property type="molecule type" value="mRNA"/>
</dbReference>
<dbReference type="RefSeq" id="XP_015639565.1">
    <property type="nucleotide sequence ID" value="XM_015784079.1"/>
</dbReference>
<dbReference type="SMR" id="Q0DKF0"/>
<dbReference type="FunCoup" id="Q0DKF0">
    <property type="interactions" value="2150"/>
</dbReference>
<dbReference type="STRING" id="39947.Q0DKF0"/>
<dbReference type="PaxDb" id="39947-Q0DKF0"/>
<dbReference type="EnsemblPlants" id="Os05t0169100-01">
    <property type="protein sequence ID" value="Os05t0169100-01"/>
    <property type="gene ID" value="Os05g0169100"/>
</dbReference>
<dbReference type="Gramene" id="Os05t0169100-01">
    <property type="protein sequence ID" value="Os05t0169100-01"/>
    <property type="gene ID" value="Os05g0169100"/>
</dbReference>
<dbReference type="KEGG" id="dosa:Os05g0169100"/>
<dbReference type="eggNOG" id="KOG0857">
    <property type="taxonomic scope" value="Eukaryota"/>
</dbReference>
<dbReference type="HOGENOM" id="CLU_084051_0_0_1"/>
<dbReference type="InParanoid" id="Q0DKF0"/>
<dbReference type="OMA" id="GNHEIYR"/>
<dbReference type="OrthoDB" id="10258869at2759"/>
<dbReference type="Proteomes" id="UP000000763">
    <property type="component" value="Chromosome 5"/>
</dbReference>
<dbReference type="Proteomes" id="UP000059680">
    <property type="component" value="Chromosome 5"/>
</dbReference>
<dbReference type="ExpressionAtlas" id="Q0DKF0">
    <property type="expression patterns" value="baseline and differential"/>
</dbReference>
<dbReference type="GO" id="GO:0022625">
    <property type="term" value="C:cytosolic large ribosomal subunit"/>
    <property type="evidence" value="ECO:0000318"/>
    <property type="project" value="GO_Central"/>
</dbReference>
<dbReference type="GO" id="GO:0003735">
    <property type="term" value="F:structural constituent of ribosome"/>
    <property type="evidence" value="ECO:0000318"/>
    <property type="project" value="GO_Central"/>
</dbReference>
<dbReference type="GO" id="GO:0006412">
    <property type="term" value="P:translation"/>
    <property type="evidence" value="ECO:0000318"/>
    <property type="project" value="GO_Central"/>
</dbReference>
<dbReference type="CDD" id="cd01433">
    <property type="entry name" value="Ribosomal_L16_L10e"/>
    <property type="match status" value="1"/>
</dbReference>
<dbReference type="FunFam" id="3.90.1170.10:FF:000002">
    <property type="entry name" value="60S ribosomal protein L10"/>
    <property type="match status" value="1"/>
</dbReference>
<dbReference type="FunFam" id="3.30.60.300:FF:000003">
    <property type="entry name" value="60S ribosomal protein L10, putative"/>
    <property type="match status" value="1"/>
</dbReference>
<dbReference type="Gene3D" id="3.90.1170.10">
    <property type="entry name" value="Ribosomal protein L10e/L16"/>
    <property type="match status" value="1"/>
</dbReference>
<dbReference type="InterPro" id="IPR047873">
    <property type="entry name" value="Ribosomal_uL16"/>
</dbReference>
<dbReference type="InterPro" id="IPR018255">
    <property type="entry name" value="Ribosomal_uL16_CS_euk_arc"/>
</dbReference>
<dbReference type="InterPro" id="IPR016180">
    <property type="entry name" value="Ribosomal_uL16_dom"/>
</dbReference>
<dbReference type="InterPro" id="IPR001197">
    <property type="entry name" value="Ribosomal_uL16_euk_arch"/>
</dbReference>
<dbReference type="InterPro" id="IPR036920">
    <property type="entry name" value="Ribosomal_uL16_sf"/>
</dbReference>
<dbReference type="NCBIfam" id="NF003239">
    <property type="entry name" value="PRK04199.1-4"/>
    <property type="match status" value="1"/>
</dbReference>
<dbReference type="NCBIfam" id="TIGR00279">
    <property type="entry name" value="uL16_euk_arch"/>
    <property type="match status" value="1"/>
</dbReference>
<dbReference type="PANTHER" id="PTHR11726">
    <property type="entry name" value="60S RIBOSOMAL PROTEIN L10"/>
    <property type="match status" value="1"/>
</dbReference>
<dbReference type="Pfam" id="PF00252">
    <property type="entry name" value="Ribosomal_L16"/>
    <property type="match status" value="1"/>
</dbReference>
<dbReference type="PIRSF" id="PIRSF005590">
    <property type="entry name" value="Ribosomal_L10"/>
    <property type="match status" value="1"/>
</dbReference>
<dbReference type="SUPFAM" id="SSF54686">
    <property type="entry name" value="Ribosomal protein L16p/L10e"/>
    <property type="match status" value="1"/>
</dbReference>
<dbReference type="PROSITE" id="PS01257">
    <property type="entry name" value="RIBOSOMAL_L10E"/>
    <property type="match status" value="1"/>
</dbReference>